<keyword id="KW-0067">ATP-binding</keyword>
<keyword id="KW-0119">Carbohydrate metabolism</keyword>
<keyword id="KW-0418">Kinase</keyword>
<keyword id="KW-0547">Nucleotide-binding</keyword>
<keyword id="KW-0808">Transferase</keyword>
<accession>B1XFV2</accession>
<evidence type="ECO:0000255" key="1">
    <source>
        <dbReference type="HAMAP-Rule" id="MF_01270"/>
    </source>
</evidence>
<feature type="chain" id="PRO_1000140157" description="Anhydro-N-acetylmuramic acid kinase">
    <location>
        <begin position="1"/>
        <end position="369"/>
    </location>
</feature>
<feature type="binding site" evidence="1">
    <location>
        <begin position="12"/>
        <end position="19"/>
    </location>
    <ligand>
        <name>ATP</name>
        <dbReference type="ChEBI" id="CHEBI:30616"/>
    </ligand>
</feature>
<sequence>MKSGRFIGVMSGTSLDGVDVVLATIDEHRVAQLASLSWPIPVSLKQAVLDICQGQQLTLSQFGQLDTQLGQLFADAVNALLKEQNLQARDIVAIGCHGQTVWHEPTGVAPHTLQIGDNNQIVARTGITVVGDFRRRDIALGGQGAPLVPAFHHALLAHPTERRMVLNIGGIANLSLLIPGQPVGGYDTGPGNMLMDAWIWRQAGKPYDKDAEWARAGKVILPLLQNMLSDPYFSQPAPKSTGREYFNYGWLERHLRHFPGVDPRDVQATLAELTAVTISEQVLLSGGCERLMVCGGGSRNPLLMARLAALLPGTEVTTTDAVGISGDDMEALAFAWLAWRTLAGLPGNLPSVTGASQETVLGAIFPANP</sequence>
<proteinExistence type="inferred from homology"/>
<reference key="1">
    <citation type="journal article" date="2008" name="J. Bacteriol.">
        <title>The complete genome sequence of Escherichia coli DH10B: insights into the biology of a laboratory workhorse.</title>
        <authorList>
            <person name="Durfee T."/>
            <person name="Nelson R."/>
            <person name="Baldwin S."/>
            <person name="Plunkett G. III"/>
            <person name="Burland V."/>
            <person name="Mau B."/>
            <person name="Petrosino J.F."/>
            <person name="Qin X."/>
            <person name="Muzny D.M."/>
            <person name="Ayele M."/>
            <person name="Gibbs R.A."/>
            <person name="Csorgo B."/>
            <person name="Posfai G."/>
            <person name="Weinstock G.M."/>
            <person name="Blattner F.R."/>
        </authorList>
    </citation>
    <scope>NUCLEOTIDE SEQUENCE [LARGE SCALE GENOMIC DNA]</scope>
    <source>
        <strain>K12 / DH10B</strain>
    </source>
</reference>
<dbReference type="EC" id="2.7.1.170" evidence="1"/>
<dbReference type="EMBL" id="CP000948">
    <property type="protein sequence ID" value="ACB02846.1"/>
    <property type="molecule type" value="Genomic_DNA"/>
</dbReference>
<dbReference type="RefSeq" id="WP_000835039.1">
    <property type="nucleotide sequence ID" value="NC_010473.1"/>
</dbReference>
<dbReference type="SMR" id="B1XFV2"/>
<dbReference type="KEGG" id="ecd:ECDH10B_1774"/>
<dbReference type="HOGENOM" id="CLU_038782_0_0_6"/>
<dbReference type="UniPathway" id="UPA00343"/>
<dbReference type="UniPathway" id="UPA00544"/>
<dbReference type="GO" id="GO:0005524">
    <property type="term" value="F:ATP binding"/>
    <property type="evidence" value="ECO:0007669"/>
    <property type="project" value="UniProtKB-UniRule"/>
</dbReference>
<dbReference type="GO" id="GO:0016301">
    <property type="term" value="F:kinase activity"/>
    <property type="evidence" value="ECO:0007669"/>
    <property type="project" value="UniProtKB-KW"/>
</dbReference>
<dbReference type="GO" id="GO:0016773">
    <property type="term" value="F:phosphotransferase activity, alcohol group as acceptor"/>
    <property type="evidence" value="ECO:0007669"/>
    <property type="project" value="UniProtKB-UniRule"/>
</dbReference>
<dbReference type="GO" id="GO:0097175">
    <property type="term" value="P:1,6-anhydro-N-acetyl-beta-muramic acid catabolic process"/>
    <property type="evidence" value="ECO:0007669"/>
    <property type="project" value="UniProtKB-UniRule"/>
</dbReference>
<dbReference type="GO" id="GO:0006040">
    <property type="term" value="P:amino sugar metabolic process"/>
    <property type="evidence" value="ECO:0007669"/>
    <property type="project" value="InterPro"/>
</dbReference>
<dbReference type="GO" id="GO:0009254">
    <property type="term" value="P:peptidoglycan turnover"/>
    <property type="evidence" value="ECO:0007669"/>
    <property type="project" value="UniProtKB-UniRule"/>
</dbReference>
<dbReference type="CDD" id="cd24050">
    <property type="entry name" value="ASKHA_NBD_ANMK"/>
    <property type="match status" value="1"/>
</dbReference>
<dbReference type="FunFam" id="3.30.420.40:FF:000090">
    <property type="entry name" value="Anhydro-N-acetylmuramic acid kinase"/>
    <property type="match status" value="1"/>
</dbReference>
<dbReference type="Gene3D" id="3.30.420.40">
    <property type="match status" value="2"/>
</dbReference>
<dbReference type="HAMAP" id="MF_01270">
    <property type="entry name" value="AnhMurNAc_kinase"/>
    <property type="match status" value="1"/>
</dbReference>
<dbReference type="InterPro" id="IPR005338">
    <property type="entry name" value="Anhydro_N_Ac-Mur_kinase"/>
</dbReference>
<dbReference type="InterPro" id="IPR043129">
    <property type="entry name" value="ATPase_NBD"/>
</dbReference>
<dbReference type="NCBIfam" id="NF007138">
    <property type="entry name" value="PRK09585.1-1"/>
    <property type="match status" value="1"/>
</dbReference>
<dbReference type="NCBIfam" id="NF007139">
    <property type="entry name" value="PRK09585.1-3"/>
    <property type="match status" value="1"/>
</dbReference>
<dbReference type="NCBIfam" id="NF007148">
    <property type="entry name" value="PRK09585.3-2"/>
    <property type="match status" value="1"/>
</dbReference>
<dbReference type="PANTHER" id="PTHR30605">
    <property type="entry name" value="ANHYDRO-N-ACETYLMURAMIC ACID KINASE"/>
    <property type="match status" value="1"/>
</dbReference>
<dbReference type="PANTHER" id="PTHR30605:SF0">
    <property type="entry name" value="ANHYDRO-N-ACETYLMURAMIC ACID KINASE"/>
    <property type="match status" value="1"/>
</dbReference>
<dbReference type="Pfam" id="PF03702">
    <property type="entry name" value="AnmK"/>
    <property type="match status" value="1"/>
</dbReference>
<dbReference type="SUPFAM" id="SSF53067">
    <property type="entry name" value="Actin-like ATPase domain"/>
    <property type="match status" value="1"/>
</dbReference>
<protein>
    <recommendedName>
        <fullName evidence="1">Anhydro-N-acetylmuramic acid kinase</fullName>
        <ecNumber evidence="1">2.7.1.170</ecNumber>
    </recommendedName>
    <alternativeName>
        <fullName evidence="1">AnhMurNAc kinase</fullName>
    </alternativeName>
</protein>
<gene>
    <name evidence="1" type="primary">anmK</name>
    <name type="ordered locus">ECDH10B_1774</name>
</gene>
<organism>
    <name type="scientific">Escherichia coli (strain K12 / DH10B)</name>
    <dbReference type="NCBI Taxonomy" id="316385"/>
    <lineage>
        <taxon>Bacteria</taxon>
        <taxon>Pseudomonadati</taxon>
        <taxon>Pseudomonadota</taxon>
        <taxon>Gammaproteobacteria</taxon>
        <taxon>Enterobacterales</taxon>
        <taxon>Enterobacteriaceae</taxon>
        <taxon>Escherichia</taxon>
    </lineage>
</organism>
<name>ANMK_ECODH</name>
<comment type="function">
    <text evidence="1">Catalyzes the specific phosphorylation of 1,6-anhydro-N-acetylmuramic acid (anhMurNAc) with the simultaneous cleavage of the 1,6-anhydro ring, generating MurNAc-6-P. Is required for the utilization of anhMurNAc either imported from the medium or derived from its own cell wall murein, and thus plays a role in cell wall recycling.</text>
</comment>
<comment type="catalytic activity">
    <reaction evidence="1">
        <text>1,6-anhydro-N-acetyl-beta-muramate + ATP + H2O = N-acetyl-D-muramate 6-phosphate + ADP + H(+)</text>
        <dbReference type="Rhea" id="RHEA:24952"/>
        <dbReference type="ChEBI" id="CHEBI:15377"/>
        <dbReference type="ChEBI" id="CHEBI:15378"/>
        <dbReference type="ChEBI" id="CHEBI:30616"/>
        <dbReference type="ChEBI" id="CHEBI:58690"/>
        <dbReference type="ChEBI" id="CHEBI:58722"/>
        <dbReference type="ChEBI" id="CHEBI:456216"/>
        <dbReference type="EC" id="2.7.1.170"/>
    </reaction>
</comment>
<comment type="pathway">
    <text evidence="1">Amino-sugar metabolism; 1,6-anhydro-N-acetylmuramate degradation.</text>
</comment>
<comment type="pathway">
    <text evidence="1">Cell wall biogenesis; peptidoglycan recycling.</text>
</comment>
<comment type="similarity">
    <text evidence="1">Belongs to the anhydro-N-acetylmuramic acid kinase family.</text>
</comment>